<keyword id="KW-1185">Reference proteome</keyword>
<keyword id="KW-0687">Ribonucleoprotein</keyword>
<keyword id="KW-0689">Ribosomal protein</keyword>
<keyword id="KW-0694">RNA-binding</keyword>
<keyword id="KW-0699">rRNA-binding</keyword>
<evidence type="ECO:0000255" key="1">
    <source>
        <dbReference type="HAMAP-Rule" id="MF_01331"/>
    </source>
</evidence>
<evidence type="ECO:0000305" key="2"/>
<feature type="chain" id="PRO_1000166087" description="Large ribosomal subunit protein uL22">
    <location>
        <begin position="1"/>
        <end position="114"/>
    </location>
</feature>
<gene>
    <name evidence="1" type="primary">rplV</name>
    <name type="ordered locus">SUB0073</name>
</gene>
<dbReference type="EMBL" id="AM946015">
    <property type="protein sequence ID" value="CAR40447.1"/>
    <property type="molecule type" value="Genomic_DNA"/>
</dbReference>
<dbReference type="RefSeq" id="WP_012657637.1">
    <property type="nucleotide sequence ID" value="NC_012004.1"/>
</dbReference>
<dbReference type="SMR" id="B9DSV5"/>
<dbReference type="STRING" id="218495.SUB0073"/>
<dbReference type="GeneID" id="93825299"/>
<dbReference type="KEGG" id="sub:SUB0073"/>
<dbReference type="eggNOG" id="COG0091">
    <property type="taxonomic scope" value="Bacteria"/>
</dbReference>
<dbReference type="HOGENOM" id="CLU_083987_3_3_9"/>
<dbReference type="OrthoDB" id="9805969at2"/>
<dbReference type="Proteomes" id="UP000000449">
    <property type="component" value="Chromosome"/>
</dbReference>
<dbReference type="GO" id="GO:0022625">
    <property type="term" value="C:cytosolic large ribosomal subunit"/>
    <property type="evidence" value="ECO:0007669"/>
    <property type="project" value="TreeGrafter"/>
</dbReference>
<dbReference type="GO" id="GO:0019843">
    <property type="term" value="F:rRNA binding"/>
    <property type="evidence" value="ECO:0007669"/>
    <property type="project" value="UniProtKB-UniRule"/>
</dbReference>
<dbReference type="GO" id="GO:0003735">
    <property type="term" value="F:structural constituent of ribosome"/>
    <property type="evidence" value="ECO:0007669"/>
    <property type="project" value="InterPro"/>
</dbReference>
<dbReference type="GO" id="GO:0006412">
    <property type="term" value="P:translation"/>
    <property type="evidence" value="ECO:0007669"/>
    <property type="project" value="UniProtKB-UniRule"/>
</dbReference>
<dbReference type="CDD" id="cd00336">
    <property type="entry name" value="Ribosomal_L22"/>
    <property type="match status" value="1"/>
</dbReference>
<dbReference type="FunFam" id="3.90.470.10:FF:000001">
    <property type="entry name" value="50S ribosomal protein L22"/>
    <property type="match status" value="1"/>
</dbReference>
<dbReference type="Gene3D" id="3.90.470.10">
    <property type="entry name" value="Ribosomal protein L22/L17"/>
    <property type="match status" value="1"/>
</dbReference>
<dbReference type="HAMAP" id="MF_01331_B">
    <property type="entry name" value="Ribosomal_uL22_B"/>
    <property type="match status" value="1"/>
</dbReference>
<dbReference type="InterPro" id="IPR001063">
    <property type="entry name" value="Ribosomal_uL22"/>
</dbReference>
<dbReference type="InterPro" id="IPR005727">
    <property type="entry name" value="Ribosomal_uL22_bac/chlpt-type"/>
</dbReference>
<dbReference type="InterPro" id="IPR047867">
    <property type="entry name" value="Ribosomal_uL22_bac/org-type"/>
</dbReference>
<dbReference type="InterPro" id="IPR018260">
    <property type="entry name" value="Ribosomal_uL22_CS"/>
</dbReference>
<dbReference type="InterPro" id="IPR036394">
    <property type="entry name" value="Ribosomal_uL22_sf"/>
</dbReference>
<dbReference type="NCBIfam" id="TIGR01044">
    <property type="entry name" value="rplV_bact"/>
    <property type="match status" value="1"/>
</dbReference>
<dbReference type="PANTHER" id="PTHR13501">
    <property type="entry name" value="CHLOROPLAST 50S RIBOSOMAL PROTEIN L22-RELATED"/>
    <property type="match status" value="1"/>
</dbReference>
<dbReference type="PANTHER" id="PTHR13501:SF8">
    <property type="entry name" value="LARGE RIBOSOMAL SUBUNIT PROTEIN UL22M"/>
    <property type="match status" value="1"/>
</dbReference>
<dbReference type="Pfam" id="PF00237">
    <property type="entry name" value="Ribosomal_L22"/>
    <property type="match status" value="1"/>
</dbReference>
<dbReference type="SUPFAM" id="SSF54843">
    <property type="entry name" value="Ribosomal protein L22"/>
    <property type="match status" value="1"/>
</dbReference>
<dbReference type="PROSITE" id="PS00464">
    <property type="entry name" value="RIBOSOMAL_L22"/>
    <property type="match status" value="1"/>
</dbReference>
<name>RL22_STRU0</name>
<reference key="1">
    <citation type="journal article" date="2009" name="BMC Genomics">
        <title>Evidence for niche adaptation in the genome of the bovine pathogen Streptococcus uberis.</title>
        <authorList>
            <person name="Ward P.N."/>
            <person name="Holden M.T.G."/>
            <person name="Leigh J.A."/>
            <person name="Lennard N."/>
            <person name="Bignell A."/>
            <person name="Barron A."/>
            <person name="Clark L."/>
            <person name="Quail M.A."/>
            <person name="Woodward J."/>
            <person name="Barrell B.G."/>
            <person name="Egan S.A."/>
            <person name="Field T.R."/>
            <person name="Maskell D."/>
            <person name="Kehoe M."/>
            <person name="Dowson C.G."/>
            <person name="Chanter N."/>
            <person name="Whatmore A.M."/>
            <person name="Bentley S.D."/>
            <person name="Parkhill J."/>
        </authorList>
    </citation>
    <scope>NUCLEOTIDE SEQUENCE [LARGE SCALE GENOMIC DNA]</scope>
    <source>
        <strain>ATCC BAA-854 / 0140J</strain>
    </source>
</reference>
<protein>
    <recommendedName>
        <fullName evidence="1">Large ribosomal subunit protein uL22</fullName>
    </recommendedName>
    <alternativeName>
        <fullName evidence="2">50S ribosomal protein L22</fullName>
    </alternativeName>
</protein>
<accession>B9DSV5</accession>
<organism>
    <name type="scientific">Streptococcus uberis (strain ATCC BAA-854 / 0140J)</name>
    <dbReference type="NCBI Taxonomy" id="218495"/>
    <lineage>
        <taxon>Bacteria</taxon>
        <taxon>Bacillati</taxon>
        <taxon>Bacillota</taxon>
        <taxon>Bacilli</taxon>
        <taxon>Lactobacillales</taxon>
        <taxon>Streptococcaceae</taxon>
        <taxon>Streptococcus</taxon>
    </lineage>
</organism>
<comment type="function">
    <text evidence="1">This protein binds specifically to 23S rRNA; its binding is stimulated by other ribosomal proteins, e.g. L4, L17, and L20. It is important during the early stages of 50S assembly. It makes multiple contacts with different domains of the 23S rRNA in the assembled 50S subunit and ribosome (By similarity).</text>
</comment>
<comment type="function">
    <text evidence="1">The globular domain of the protein is located near the polypeptide exit tunnel on the outside of the subunit, while an extended beta-hairpin is found that lines the wall of the exit tunnel in the center of the 70S ribosome.</text>
</comment>
<comment type="subunit">
    <text evidence="1">Part of the 50S ribosomal subunit.</text>
</comment>
<comment type="similarity">
    <text evidence="1">Belongs to the universal ribosomal protein uL22 family.</text>
</comment>
<sequence length="114" mass="12415">MAEITSAKAMARTVRVSPRKTRLVLDLIRGKKVADAIAILKFTPNKAARVIEKTLNSAIANAENNFGLEKANLVVSETFANEGPTMKRFRPRAKGSASPINKRTTHVTVVVAEK</sequence>
<proteinExistence type="inferred from homology"/>